<feature type="chain" id="PRO_1000086401" description="DNA-directed RNA polymerase subunit beta'">
    <location>
        <begin position="1"/>
        <end position="1400"/>
    </location>
</feature>
<feature type="binding site" evidence="1">
    <location>
        <position position="71"/>
    </location>
    <ligand>
        <name>Zn(2+)</name>
        <dbReference type="ChEBI" id="CHEBI:29105"/>
        <label>1</label>
    </ligand>
</feature>
<feature type="binding site" evidence="1">
    <location>
        <position position="73"/>
    </location>
    <ligand>
        <name>Zn(2+)</name>
        <dbReference type="ChEBI" id="CHEBI:29105"/>
        <label>1</label>
    </ligand>
</feature>
<feature type="binding site" evidence="1">
    <location>
        <position position="86"/>
    </location>
    <ligand>
        <name>Zn(2+)</name>
        <dbReference type="ChEBI" id="CHEBI:29105"/>
        <label>1</label>
    </ligand>
</feature>
<feature type="binding site" evidence="1">
    <location>
        <position position="89"/>
    </location>
    <ligand>
        <name>Zn(2+)</name>
        <dbReference type="ChEBI" id="CHEBI:29105"/>
        <label>1</label>
    </ligand>
</feature>
<feature type="binding site" evidence="1">
    <location>
        <position position="462"/>
    </location>
    <ligand>
        <name>Mg(2+)</name>
        <dbReference type="ChEBI" id="CHEBI:18420"/>
    </ligand>
</feature>
<feature type="binding site" evidence="1">
    <location>
        <position position="464"/>
    </location>
    <ligand>
        <name>Mg(2+)</name>
        <dbReference type="ChEBI" id="CHEBI:18420"/>
    </ligand>
</feature>
<feature type="binding site" evidence="1">
    <location>
        <position position="466"/>
    </location>
    <ligand>
        <name>Mg(2+)</name>
        <dbReference type="ChEBI" id="CHEBI:18420"/>
    </ligand>
</feature>
<feature type="binding site" evidence="1">
    <location>
        <position position="811"/>
    </location>
    <ligand>
        <name>Zn(2+)</name>
        <dbReference type="ChEBI" id="CHEBI:29105"/>
        <label>2</label>
    </ligand>
</feature>
<feature type="binding site" evidence="1">
    <location>
        <position position="885"/>
    </location>
    <ligand>
        <name>Zn(2+)</name>
        <dbReference type="ChEBI" id="CHEBI:29105"/>
        <label>2</label>
    </ligand>
</feature>
<feature type="binding site" evidence="1">
    <location>
        <position position="892"/>
    </location>
    <ligand>
        <name>Zn(2+)</name>
        <dbReference type="ChEBI" id="CHEBI:29105"/>
        <label>2</label>
    </ligand>
</feature>
<feature type="binding site" evidence="1">
    <location>
        <position position="895"/>
    </location>
    <ligand>
        <name>Zn(2+)</name>
        <dbReference type="ChEBI" id="CHEBI:29105"/>
        <label>2</label>
    </ligand>
</feature>
<reference key="1">
    <citation type="journal article" date="2011" name="J. Bacteriol.">
        <title>Genome of Ochrobactrum anthropi ATCC 49188 T, a versatile opportunistic pathogen and symbiont of several eukaryotic hosts.</title>
        <authorList>
            <person name="Chain P.S."/>
            <person name="Lang D.M."/>
            <person name="Comerci D.J."/>
            <person name="Malfatti S.A."/>
            <person name="Vergez L.M."/>
            <person name="Shin M."/>
            <person name="Ugalde R.A."/>
            <person name="Garcia E."/>
            <person name="Tolmasky M.E."/>
        </authorList>
    </citation>
    <scope>NUCLEOTIDE SEQUENCE [LARGE SCALE GENOMIC DNA]</scope>
    <source>
        <strain>ATCC 49188 / DSM 6882 / CCUG 24695 / JCM 21032 / LMG 3331 / NBRC 15819 / NCTC 12168 / Alc 37</strain>
    </source>
</reference>
<dbReference type="EC" id="2.7.7.6" evidence="1"/>
<dbReference type="EMBL" id="CP000758">
    <property type="protein sequence ID" value="ABS14664.1"/>
    <property type="molecule type" value="Genomic_DNA"/>
</dbReference>
<dbReference type="RefSeq" id="WP_012091907.1">
    <property type="nucleotide sequence ID" value="NC_009667.1"/>
</dbReference>
<dbReference type="SMR" id="A6X0B0"/>
<dbReference type="STRING" id="439375.Oant_1948"/>
<dbReference type="GeneID" id="61317593"/>
<dbReference type="KEGG" id="oan:Oant_1948"/>
<dbReference type="eggNOG" id="COG0086">
    <property type="taxonomic scope" value="Bacteria"/>
</dbReference>
<dbReference type="HOGENOM" id="CLU_000524_3_1_5"/>
<dbReference type="PhylomeDB" id="A6X0B0"/>
<dbReference type="Proteomes" id="UP000002301">
    <property type="component" value="Chromosome 1"/>
</dbReference>
<dbReference type="GO" id="GO:0000428">
    <property type="term" value="C:DNA-directed RNA polymerase complex"/>
    <property type="evidence" value="ECO:0007669"/>
    <property type="project" value="UniProtKB-KW"/>
</dbReference>
<dbReference type="GO" id="GO:0003677">
    <property type="term" value="F:DNA binding"/>
    <property type="evidence" value="ECO:0007669"/>
    <property type="project" value="UniProtKB-UniRule"/>
</dbReference>
<dbReference type="GO" id="GO:0003899">
    <property type="term" value="F:DNA-directed RNA polymerase activity"/>
    <property type="evidence" value="ECO:0007669"/>
    <property type="project" value="UniProtKB-UniRule"/>
</dbReference>
<dbReference type="GO" id="GO:0000287">
    <property type="term" value="F:magnesium ion binding"/>
    <property type="evidence" value="ECO:0007669"/>
    <property type="project" value="UniProtKB-UniRule"/>
</dbReference>
<dbReference type="GO" id="GO:0008270">
    <property type="term" value="F:zinc ion binding"/>
    <property type="evidence" value="ECO:0007669"/>
    <property type="project" value="UniProtKB-UniRule"/>
</dbReference>
<dbReference type="GO" id="GO:0006351">
    <property type="term" value="P:DNA-templated transcription"/>
    <property type="evidence" value="ECO:0007669"/>
    <property type="project" value="UniProtKB-UniRule"/>
</dbReference>
<dbReference type="CDD" id="cd02655">
    <property type="entry name" value="RNAP_beta'_C"/>
    <property type="match status" value="1"/>
</dbReference>
<dbReference type="CDD" id="cd01609">
    <property type="entry name" value="RNAP_beta'_N"/>
    <property type="match status" value="1"/>
</dbReference>
<dbReference type="FunFam" id="4.10.860.120:FF:000001">
    <property type="entry name" value="DNA-directed RNA polymerase subunit beta"/>
    <property type="match status" value="1"/>
</dbReference>
<dbReference type="Gene3D" id="1.10.132.30">
    <property type="match status" value="1"/>
</dbReference>
<dbReference type="Gene3D" id="1.10.150.390">
    <property type="match status" value="1"/>
</dbReference>
<dbReference type="Gene3D" id="1.10.1790.20">
    <property type="match status" value="1"/>
</dbReference>
<dbReference type="Gene3D" id="1.10.40.90">
    <property type="match status" value="1"/>
</dbReference>
<dbReference type="Gene3D" id="2.40.40.20">
    <property type="match status" value="1"/>
</dbReference>
<dbReference type="Gene3D" id="2.40.50.100">
    <property type="match status" value="3"/>
</dbReference>
<dbReference type="Gene3D" id="4.10.860.120">
    <property type="entry name" value="RNA polymerase II, clamp domain"/>
    <property type="match status" value="1"/>
</dbReference>
<dbReference type="Gene3D" id="1.10.274.100">
    <property type="entry name" value="RNA polymerase Rpb1, domain 3"/>
    <property type="match status" value="2"/>
</dbReference>
<dbReference type="HAMAP" id="MF_01322">
    <property type="entry name" value="RNApol_bact_RpoC"/>
    <property type="match status" value="1"/>
</dbReference>
<dbReference type="InterPro" id="IPR045867">
    <property type="entry name" value="DNA-dir_RpoC_beta_prime"/>
</dbReference>
<dbReference type="InterPro" id="IPR012754">
    <property type="entry name" value="DNA-dir_RpoC_beta_prime_bact"/>
</dbReference>
<dbReference type="InterPro" id="IPR000722">
    <property type="entry name" value="RNA_pol_asu"/>
</dbReference>
<dbReference type="InterPro" id="IPR006592">
    <property type="entry name" value="RNA_pol_N"/>
</dbReference>
<dbReference type="InterPro" id="IPR007080">
    <property type="entry name" value="RNA_pol_Rpb1_1"/>
</dbReference>
<dbReference type="InterPro" id="IPR007066">
    <property type="entry name" value="RNA_pol_Rpb1_3"/>
</dbReference>
<dbReference type="InterPro" id="IPR042102">
    <property type="entry name" value="RNA_pol_Rpb1_3_sf"/>
</dbReference>
<dbReference type="InterPro" id="IPR007083">
    <property type="entry name" value="RNA_pol_Rpb1_4"/>
</dbReference>
<dbReference type="InterPro" id="IPR007081">
    <property type="entry name" value="RNA_pol_Rpb1_5"/>
</dbReference>
<dbReference type="InterPro" id="IPR044893">
    <property type="entry name" value="RNA_pol_Rpb1_clamp_domain"/>
</dbReference>
<dbReference type="InterPro" id="IPR038120">
    <property type="entry name" value="Rpb1_funnel_sf"/>
</dbReference>
<dbReference type="NCBIfam" id="TIGR02386">
    <property type="entry name" value="rpoC_TIGR"/>
    <property type="match status" value="1"/>
</dbReference>
<dbReference type="PANTHER" id="PTHR19376">
    <property type="entry name" value="DNA-DIRECTED RNA POLYMERASE"/>
    <property type="match status" value="1"/>
</dbReference>
<dbReference type="PANTHER" id="PTHR19376:SF54">
    <property type="entry name" value="DNA-DIRECTED RNA POLYMERASE SUBUNIT BETA"/>
    <property type="match status" value="1"/>
</dbReference>
<dbReference type="Pfam" id="PF04997">
    <property type="entry name" value="RNA_pol_Rpb1_1"/>
    <property type="match status" value="1"/>
</dbReference>
<dbReference type="Pfam" id="PF00623">
    <property type="entry name" value="RNA_pol_Rpb1_2"/>
    <property type="match status" value="1"/>
</dbReference>
<dbReference type="Pfam" id="PF04983">
    <property type="entry name" value="RNA_pol_Rpb1_3"/>
    <property type="match status" value="1"/>
</dbReference>
<dbReference type="Pfam" id="PF05000">
    <property type="entry name" value="RNA_pol_Rpb1_4"/>
    <property type="match status" value="1"/>
</dbReference>
<dbReference type="Pfam" id="PF04998">
    <property type="entry name" value="RNA_pol_Rpb1_5"/>
    <property type="match status" value="1"/>
</dbReference>
<dbReference type="SMART" id="SM00663">
    <property type="entry name" value="RPOLA_N"/>
    <property type="match status" value="1"/>
</dbReference>
<dbReference type="SUPFAM" id="SSF64484">
    <property type="entry name" value="beta and beta-prime subunits of DNA dependent RNA-polymerase"/>
    <property type="match status" value="1"/>
</dbReference>
<accession>A6X0B0</accession>
<sequence>MNQEVMNLFNPQAPAQTFDSIRISIASPEKILSWSYGEIKKPETINYRTFKPERDGLFCARIFGPIKDYECLCGKYKRMKYKGIICEKCGVEVTLSRVRRERMGHIELAAPVAHIWFLKSLPSRIGTLLDMTLKDIERVLYFENYIVTEPGLTSLKEHQLLSEEEYMIAVDEFGEDQFTALIGAEAIYELLASMELEKIAADLRVDLAETTSDLKQKKLMKRLKIVENFLESGNRPEWMIMKIVPVIPPDLRPLVPLDGGRFATSDLNDLYRRVINRNNRLKRLIELRAPGIIIRNEKRMLQEAVDALFDNGRRGRVITGANKRPLKSLSDMLKGKQGRFRQNLLGKRVDYSGRSVIVTGPELKLHQCGLPKKMALELFKPFIYARLDAKGYSSTVKQAKKLVEKERPEVWDILDEVIREHPVLLNRAPTLHRLGIQAFEPTLIEGKAIQLHPLVCTAFNADFDGDQMAVHVPLSLEAQLEARVLMMSTNNILHPANGAPIIVPSQDMVLGLYYLSIVADKEPGEGMMFADMGELQHALENKVVTLHTKIKGRFKTVDAEGKPVSKIYDTTPGRMITGELLPKNVNVPFDICNQEMTKKNISKMIDHVYRHCGQKETVIFCDRIMQLGFAHACRAGISFGKDDMVIPDTKAKIVADTEALTTEYEQQYNDGLITQGEKYNKVVDAWGKATDKITEEMMARLKAVEFDPVTGRQKQMNSVYMMSHSGARGSVNQMRQLGGMRGLMAKPSGEIIETPIISNFKEGLTVNEYFNSTHGARKGLADTALKTANSGYLTRRLVDVAQDAIISEVDCGAEIGLTMQPIVDAGQIVASIGQRVLGRTALDPILHPTTGEVIVEAGRMIEEKDVEIIEKAAIQSIRIRSALTCETRNGVCAKCYGRDLARGTPVNQGEAVGVIAAQSIGEPGTQLTMRTFHLGGTAQVVDSSYLEASYEGTVKLRNRNVVRNSDGNLVVMGRNMAVLILDNTGKERAVHRVTYGSRLFVDEADTVKRGQRIAEWDPYTRPIMTEVEGYVEFEDLVDGLSVSESADESTGITKRVVIDWRSTPRGSDLKPAMVIKDKAGKILKLSKGGDARFMLSVESILSVEPGAHVKAGDVIARLPMESAKTKDITGGLPRVAELFEARRPKDHAVIAEIDGTVRFGRDYKNKRRIIIEPNDDTIEPVEYLIPKGKPFHLQDGDVIEKGEYILDGNPAPHDILAIKGVEALASYLVNEIQEVYRLQGVLINDKHIEVIVRQMLQKVEITESGDTGYIPGDHVDRIELEEINERLIEEGKKPGSGNPVLLGITKASLQTPSFISAASFQETTRVLTEAAVAGKMDTLQGLKENVIVGRLIPAGTGGMTNQIRRIATARDELIIDERRKSSGSTEANAMLVDMTNNAAE</sequence>
<protein>
    <recommendedName>
        <fullName evidence="1">DNA-directed RNA polymerase subunit beta'</fullName>
        <shortName evidence="1">RNAP subunit beta'</shortName>
        <ecNumber evidence="1">2.7.7.6</ecNumber>
    </recommendedName>
    <alternativeName>
        <fullName evidence="1">RNA polymerase subunit beta'</fullName>
    </alternativeName>
    <alternativeName>
        <fullName evidence="1">Transcriptase subunit beta'</fullName>
    </alternativeName>
</protein>
<name>RPOC_BRUA4</name>
<comment type="function">
    <text evidence="1">DNA-dependent RNA polymerase catalyzes the transcription of DNA into RNA using the four ribonucleoside triphosphates as substrates.</text>
</comment>
<comment type="catalytic activity">
    <reaction evidence="1">
        <text>RNA(n) + a ribonucleoside 5'-triphosphate = RNA(n+1) + diphosphate</text>
        <dbReference type="Rhea" id="RHEA:21248"/>
        <dbReference type="Rhea" id="RHEA-COMP:14527"/>
        <dbReference type="Rhea" id="RHEA-COMP:17342"/>
        <dbReference type="ChEBI" id="CHEBI:33019"/>
        <dbReference type="ChEBI" id="CHEBI:61557"/>
        <dbReference type="ChEBI" id="CHEBI:140395"/>
        <dbReference type="EC" id="2.7.7.6"/>
    </reaction>
</comment>
<comment type="cofactor">
    <cofactor evidence="1">
        <name>Mg(2+)</name>
        <dbReference type="ChEBI" id="CHEBI:18420"/>
    </cofactor>
    <text evidence="1">Binds 1 Mg(2+) ion per subunit.</text>
</comment>
<comment type="cofactor">
    <cofactor evidence="1">
        <name>Zn(2+)</name>
        <dbReference type="ChEBI" id="CHEBI:29105"/>
    </cofactor>
    <text evidence="1">Binds 2 Zn(2+) ions per subunit.</text>
</comment>
<comment type="subunit">
    <text evidence="1">The RNAP catalytic core consists of 2 alpha, 1 beta, 1 beta' and 1 omega subunit. When a sigma factor is associated with the core the holoenzyme is formed, which can initiate transcription.</text>
</comment>
<comment type="similarity">
    <text evidence="1">Belongs to the RNA polymerase beta' chain family.</text>
</comment>
<organism>
    <name type="scientific">Brucella anthropi (strain ATCC 49188 / DSM 6882 / CCUG 24695 / JCM 21032 / LMG 3331 / NBRC 15819 / NCTC 12168 / Alc 37)</name>
    <name type="common">Ochrobactrum anthropi</name>
    <dbReference type="NCBI Taxonomy" id="439375"/>
    <lineage>
        <taxon>Bacteria</taxon>
        <taxon>Pseudomonadati</taxon>
        <taxon>Pseudomonadota</taxon>
        <taxon>Alphaproteobacteria</taxon>
        <taxon>Hyphomicrobiales</taxon>
        <taxon>Brucellaceae</taxon>
        <taxon>Brucella/Ochrobactrum group</taxon>
        <taxon>Brucella</taxon>
    </lineage>
</organism>
<gene>
    <name evidence="1" type="primary">rpoC</name>
    <name type="ordered locus">Oant_1948</name>
</gene>
<evidence type="ECO:0000255" key="1">
    <source>
        <dbReference type="HAMAP-Rule" id="MF_01322"/>
    </source>
</evidence>
<proteinExistence type="inferred from homology"/>
<keyword id="KW-0240">DNA-directed RNA polymerase</keyword>
<keyword id="KW-0460">Magnesium</keyword>
<keyword id="KW-0479">Metal-binding</keyword>
<keyword id="KW-0548">Nucleotidyltransferase</keyword>
<keyword id="KW-1185">Reference proteome</keyword>
<keyword id="KW-0804">Transcription</keyword>
<keyword id="KW-0808">Transferase</keyword>
<keyword id="KW-0862">Zinc</keyword>